<evidence type="ECO:0000255" key="1">
    <source>
        <dbReference type="HAMAP-Rule" id="MF_00373"/>
    </source>
</evidence>
<evidence type="ECO:0000305" key="2"/>
<organism>
    <name type="scientific">Paracidovorax citrulli (strain AAC00-1)</name>
    <name type="common">Acidovorax citrulli</name>
    <dbReference type="NCBI Taxonomy" id="397945"/>
    <lineage>
        <taxon>Bacteria</taxon>
        <taxon>Pseudomonadati</taxon>
        <taxon>Pseudomonadota</taxon>
        <taxon>Betaproteobacteria</taxon>
        <taxon>Burkholderiales</taxon>
        <taxon>Comamonadaceae</taxon>
        <taxon>Paracidovorax</taxon>
    </lineage>
</organism>
<keyword id="KW-0687">Ribonucleoprotein</keyword>
<keyword id="KW-0689">Ribosomal protein</keyword>
<comment type="similarity">
    <text evidence="1">Belongs to the bacterial ribosomal protein bL28 family.</text>
</comment>
<reference key="1">
    <citation type="submission" date="2006-12" db="EMBL/GenBank/DDBJ databases">
        <title>Complete sequence of Acidovorax avenae subsp. citrulli AAC00-1.</title>
        <authorList>
            <person name="Copeland A."/>
            <person name="Lucas S."/>
            <person name="Lapidus A."/>
            <person name="Barry K."/>
            <person name="Detter J.C."/>
            <person name="Glavina del Rio T."/>
            <person name="Dalin E."/>
            <person name="Tice H."/>
            <person name="Pitluck S."/>
            <person name="Kiss H."/>
            <person name="Brettin T."/>
            <person name="Bruce D."/>
            <person name="Han C."/>
            <person name="Tapia R."/>
            <person name="Gilna P."/>
            <person name="Schmutz J."/>
            <person name="Larimer F."/>
            <person name="Land M."/>
            <person name="Hauser L."/>
            <person name="Kyrpides N."/>
            <person name="Kim E."/>
            <person name="Stahl D."/>
            <person name="Richardson P."/>
        </authorList>
    </citation>
    <scope>NUCLEOTIDE SEQUENCE [LARGE SCALE GENOMIC DNA]</scope>
    <source>
        <strain>AAC00-1</strain>
    </source>
</reference>
<protein>
    <recommendedName>
        <fullName evidence="1">Large ribosomal subunit protein bL28</fullName>
    </recommendedName>
    <alternativeName>
        <fullName evidence="2">50S ribosomal protein L28</fullName>
    </alternativeName>
</protein>
<accession>A1TSP7</accession>
<sequence>MARVCDVTGKKPMVGNNVSHANNKTKRRFLPNLQYRRFWVESENRWVRLRVSSAALRLIDKNGIDSVLADLRARGQA</sequence>
<feature type="chain" id="PRO_1000007152" description="Large ribosomal subunit protein bL28">
    <location>
        <begin position="1"/>
        <end position="77"/>
    </location>
</feature>
<name>RL28_PARC0</name>
<proteinExistence type="inferred from homology"/>
<dbReference type="EMBL" id="CP000512">
    <property type="protein sequence ID" value="ABM33985.1"/>
    <property type="molecule type" value="Genomic_DNA"/>
</dbReference>
<dbReference type="RefSeq" id="WP_005797187.1">
    <property type="nucleotide sequence ID" value="NC_008752.1"/>
</dbReference>
<dbReference type="SMR" id="A1TSP7"/>
<dbReference type="STRING" id="397945.Aave_3428"/>
<dbReference type="GeneID" id="34235656"/>
<dbReference type="GeneID" id="79791685"/>
<dbReference type="KEGG" id="aav:Aave_3428"/>
<dbReference type="eggNOG" id="COG0227">
    <property type="taxonomic scope" value="Bacteria"/>
</dbReference>
<dbReference type="HOGENOM" id="CLU_064548_3_1_4"/>
<dbReference type="OrthoDB" id="9805609at2"/>
<dbReference type="Proteomes" id="UP000002596">
    <property type="component" value="Chromosome"/>
</dbReference>
<dbReference type="GO" id="GO:0022625">
    <property type="term" value="C:cytosolic large ribosomal subunit"/>
    <property type="evidence" value="ECO:0007669"/>
    <property type="project" value="TreeGrafter"/>
</dbReference>
<dbReference type="GO" id="GO:0003735">
    <property type="term" value="F:structural constituent of ribosome"/>
    <property type="evidence" value="ECO:0007669"/>
    <property type="project" value="InterPro"/>
</dbReference>
<dbReference type="GO" id="GO:0006412">
    <property type="term" value="P:translation"/>
    <property type="evidence" value="ECO:0007669"/>
    <property type="project" value="UniProtKB-UniRule"/>
</dbReference>
<dbReference type="FunFam" id="2.30.170.40:FF:000001">
    <property type="entry name" value="50S ribosomal protein L28"/>
    <property type="match status" value="1"/>
</dbReference>
<dbReference type="Gene3D" id="2.30.170.40">
    <property type="entry name" value="Ribosomal protein L28/L24"/>
    <property type="match status" value="1"/>
</dbReference>
<dbReference type="HAMAP" id="MF_00373">
    <property type="entry name" value="Ribosomal_bL28"/>
    <property type="match status" value="1"/>
</dbReference>
<dbReference type="InterPro" id="IPR026569">
    <property type="entry name" value="Ribosomal_bL28"/>
</dbReference>
<dbReference type="InterPro" id="IPR034704">
    <property type="entry name" value="Ribosomal_bL28/bL31-like_sf"/>
</dbReference>
<dbReference type="InterPro" id="IPR001383">
    <property type="entry name" value="Ribosomal_bL28_bact-type"/>
</dbReference>
<dbReference type="InterPro" id="IPR037147">
    <property type="entry name" value="Ribosomal_bL28_sf"/>
</dbReference>
<dbReference type="NCBIfam" id="TIGR00009">
    <property type="entry name" value="L28"/>
    <property type="match status" value="1"/>
</dbReference>
<dbReference type="PANTHER" id="PTHR13528">
    <property type="entry name" value="39S RIBOSOMAL PROTEIN L28, MITOCHONDRIAL"/>
    <property type="match status" value="1"/>
</dbReference>
<dbReference type="PANTHER" id="PTHR13528:SF2">
    <property type="entry name" value="LARGE RIBOSOMAL SUBUNIT PROTEIN BL28M"/>
    <property type="match status" value="1"/>
</dbReference>
<dbReference type="Pfam" id="PF00830">
    <property type="entry name" value="Ribosomal_L28"/>
    <property type="match status" value="1"/>
</dbReference>
<dbReference type="SUPFAM" id="SSF143800">
    <property type="entry name" value="L28p-like"/>
    <property type="match status" value="1"/>
</dbReference>
<gene>
    <name evidence="1" type="primary">rpmB</name>
    <name type="ordered locus">Aave_3428</name>
</gene>